<name>MPRIP_RAT</name>
<gene>
    <name type="primary">Mprip</name>
    <name type="synonym">Mrip</name>
    <name type="synonym">Rhoip3</name>
</gene>
<protein>
    <recommendedName>
        <fullName>Myosin phosphatase Rho-interacting protein</fullName>
    </recommendedName>
    <alternativeName>
        <fullName>Rho-interacting protein 3</fullName>
        <shortName>RIP3</shortName>
    </alternativeName>
    <alternativeName>
        <fullName>p116Rip</fullName>
    </alternativeName>
</protein>
<dbReference type="EMBL" id="AF311311">
    <property type="protein sequence ID" value="AAG23699.1"/>
    <property type="molecule type" value="mRNA"/>
</dbReference>
<dbReference type="EMBL" id="BC098911">
    <property type="protein sequence ID" value="AAH98911.1"/>
    <property type="molecule type" value="mRNA"/>
</dbReference>
<dbReference type="RefSeq" id="NP_001029194.1">
    <property type="nucleotide sequence ID" value="NM_001034022.1"/>
</dbReference>
<dbReference type="RefSeq" id="NP_446266.2">
    <property type="nucleotide sequence ID" value="NM_053814.2"/>
</dbReference>
<dbReference type="SMR" id="Q9ERE6"/>
<dbReference type="BioGRID" id="250473">
    <property type="interactions" value="2"/>
</dbReference>
<dbReference type="FunCoup" id="Q9ERE6">
    <property type="interactions" value="1865"/>
</dbReference>
<dbReference type="STRING" id="10116.ENSRNOP00000069198"/>
<dbReference type="CarbonylDB" id="Q9ERE6"/>
<dbReference type="GlyGen" id="Q9ERE6">
    <property type="glycosylation" value="1 site"/>
</dbReference>
<dbReference type="iPTMnet" id="Q9ERE6"/>
<dbReference type="PhosphoSitePlus" id="Q9ERE6"/>
<dbReference type="PaxDb" id="10116-ENSRNOP00000045501"/>
<dbReference type="GeneID" id="116504"/>
<dbReference type="KEGG" id="rno:116504"/>
<dbReference type="UCSC" id="RGD:619947">
    <molecule id="Q9ERE6-1"/>
    <property type="organism name" value="rat"/>
</dbReference>
<dbReference type="AGR" id="RGD:619947"/>
<dbReference type="CTD" id="23164"/>
<dbReference type="RGD" id="619947">
    <property type="gene designation" value="Mprip"/>
</dbReference>
<dbReference type="eggNOG" id="KOG4807">
    <property type="taxonomic scope" value="Eukaryota"/>
</dbReference>
<dbReference type="InParanoid" id="Q9ERE6"/>
<dbReference type="OrthoDB" id="9942268at2759"/>
<dbReference type="PRO" id="PR:Q9ERE6"/>
<dbReference type="Proteomes" id="UP000002494">
    <property type="component" value="Unplaced"/>
</dbReference>
<dbReference type="GO" id="GO:0015629">
    <property type="term" value="C:actin cytoskeleton"/>
    <property type="evidence" value="ECO:0000318"/>
    <property type="project" value="GO_Central"/>
</dbReference>
<dbReference type="GO" id="GO:0005737">
    <property type="term" value="C:cytoplasm"/>
    <property type="evidence" value="ECO:0007669"/>
    <property type="project" value="UniProtKB-KW"/>
</dbReference>
<dbReference type="GO" id="GO:0001725">
    <property type="term" value="C:stress fiber"/>
    <property type="evidence" value="ECO:0000314"/>
    <property type="project" value="RGD"/>
</dbReference>
<dbReference type="GO" id="GO:0051015">
    <property type="term" value="F:actin filament binding"/>
    <property type="evidence" value="ECO:0000318"/>
    <property type="project" value="GO_Central"/>
</dbReference>
<dbReference type="GO" id="GO:0032507">
    <property type="term" value="P:maintenance of protein location in cell"/>
    <property type="evidence" value="ECO:0000315"/>
    <property type="project" value="RGD"/>
</dbReference>
<dbReference type="CDD" id="cd13275">
    <property type="entry name" value="PH_M-RIP"/>
    <property type="match status" value="1"/>
</dbReference>
<dbReference type="CDD" id="cd01236">
    <property type="entry name" value="PH_RIP"/>
    <property type="match status" value="1"/>
</dbReference>
<dbReference type="FunFam" id="2.30.29.30:FF:000133">
    <property type="entry name" value="myosin phosphatase Rho-interacting protein isoform X1"/>
    <property type="match status" value="1"/>
</dbReference>
<dbReference type="FunFam" id="2.30.29.30:FF:000190">
    <property type="entry name" value="myosin phosphatase Rho-interacting protein isoform X2"/>
    <property type="match status" value="1"/>
</dbReference>
<dbReference type="Gene3D" id="2.30.29.30">
    <property type="entry name" value="Pleckstrin-homology domain (PH domain)/Phosphotyrosine-binding domain (PTB)"/>
    <property type="match status" value="2"/>
</dbReference>
<dbReference type="InterPro" id="IPR052223">
    <property type="entry name" value="Actin_Cytoskeleton_Reg"/>
</dbReference>
<dbReference type="InterPro" id="IPR039597">
    <property type="entry name" value="M-RIP_PH"/>
</dbReference>
<dbReference type="InterPro" id="IPR011993">
    <property type="entry name" value="PH-like_dom_sf"/>
</dbReference>
<dbReference type="InterPro" id="IPR001849">
    <property type="entry name" value="PH_domain"/>
</dbReference>
<dbReference type="PANTHER" id="PTHR17271:SF9">
    <property type="entry name" value="MYOSIN PHOSPHATASE RHO-INTERACTING PROTEIN"/>
    <property type="match status" value="1"/>
</dbReference>
<dbReference type="PANTHER" id="PTHR17271">
    <property type="entry name" value="PLECKSTRIN HOMOLOGY PH DOMAIN-CONTAINING PROTEIN"/>
    <property type="match status" value="1"/>
</dbReference>
<dbReference type="Pfam" id="PF00169">
    <property type="entry name" value="PH"/>
    <property type="match status" value="2"/>
</dbReference>
<dbReference type="SMART" id="SM00233">
    <property type="entry name" value="PH"/>
    <property type="match status" value="2"/>
</dbReference>
<dbReference type="SUPFAM" id="SSF50729">
    <property type="entry name" value="PH domain-like"/>
    <property type="match status" value="2"/>
</dbReference>
<dbReference type="PROSITE" id="PS50003">
    <property type="entry name" value="PH_DOMAIN"/>
    <property type="match status" value="2"/>
</dbReference>
<sequence>MSAAKENPCRKFQANIFNKSKCQNCFKPRESHLLNDEDLTQAKPIYGGWLLLAPDGTDFDNPVHRSRKWQRRFFILYEHGLLRYALDEMPTTLPQGTINMNQCTDVVDGEARTGQKFSLCILTPDKEHFIRAETKEIISGWLEMLMVYPRTNKQNQKKKRKVEPPTPQEPGPAKMAVTSSSGGSSGSSSSSSSSSIPSAEKVPTTKSTLWQEEMRAKDQPDGTSLSPVQSPSQSQPPAACTPRETGLDSKEDENILSGDRVDGGRKVRVESGYFSLEKAKQDLRAEEQLPPLLSPPSPSTPHSRRSQVIEKFEALDIEKAEHMETNMLILTTPSSDTRQGRSERRAIPRKRDFASETPTAPLSDACPLSPHRRAKSLDRRSTESSMTPDLLNFKKGWLTKQYEDGQWKKHWFVLADQSLRYYRDSVAEEAADLDGEINLSTCYDVTEYPVQRNYGFQIHTKEGEFTLSAMTSGIRRNWIQTIMKHVLPTSAPDVTSSLPEGKNKSTSFDTCLRPSEKQEAEPGEPDPEQKKSRARERRREGRSKTFDWAEFRPIQQALAQERASTVGSSDSGDPGCLEAEPGELERERARRREERRKRFGMLDTNDGPGMEDTALRMDIDRSPGLLGTPDLKTQNVHVEIEQRWHQVETTPLREEKQVPIAPLHLSLEDRSERLSTHELTSLLEKELEQSQKEASDLLEQNRLLQDQLRVALGREQSAREGYVLQATCERGFAAMEETHQKKIEDLQRQHQRELEKLREEKDRLLAEETAATISAIEAMKNAHREEMERELEKSQRSQISSINSDIEALRRQYLEELQSVQRELEVLSEQYSQKCLENAHLAQALEAERQALRQCQRENQELNAHNQELNNRLAAEITRLRTLLTREGGGESTGLPLTQGKDAYELEVLLRVKESEIQYLKQEISSLKDELQTALRDKKYASDKYKDIYTELSIAKAKADCDISRLKEQLKAATEALGEKSPEGTTVSGYDIMKSKSNPDFLKKDRSCVTRQLRNIRSKSVIEQVSWDN</sequence>
<comment type="function">
    <text evidence="1">Targets myosin phosphatase to the actin cytoskeleton. Required for the regulation of the actin cytoskeleton by RhoA and ROCK1. Depletion leads to an increased number of stress fibers in smooth muscle cells through stabilization of actin fibers by phosphorylated myosin. Overexpression of MRIP as well as its F-actin-binding region leads to disassembly of stress fibers in neuronal cells (By similarity).</text>
</comment>
<comment type="subunit">
    <text evidence="1">Binds RHOA, PPP1R12A/MBS and PPP1R12C/MBS85 through adjacent coiled coil domains. Interacts with MYZAP. Binds F-actin through its N-terminus (By similarity).</text>
</comment>
<comment type="subcellular location">
    <subcellularLocation>
        <location evidence="1">Cytoplasm</location>
        <location evidence="1">Cytoskeleton</location>
    </subcellularLocation>
    <text evidence="1">Colocalizes with F-actin.</text>
</comment>
<comment type="alternative products">
    <event type="alternative splicing"/>
    <isoform>
        <id>Q9ERE6-1</id>
        <name>1</name>
        <sequence type="displayed"/>
    </isoform>
    <isoform>
        <id>Q9ERE6-2</id>
        <name>2</name>
        <sequence type="described" ref="VSP_017301"/>
    </isoform>
</comment>
<proteinExistence type="evidence at protein level"/>
<accession>Q9ERE6</accession>
<accession>Q4KM03</accession>
<organism>
    <name type="scientific">Rattus norvegicus</name>
    <name type="common">Rat</name>
    <dbReference type="NCBI Taxonomy" id="10116"/>
    <lineage>
        <taxon>Eukaryota</taxon>
        <taxon>Metazoa</taxon>
        <taxon>Chordata</taxon>
        <taxon>Craniata</taxon>
        <taxon>Vertebrata</taxon>
        <taxon>Euteleostomi</taxon>
        <taxon>Mammalia</taxon>
        <taxon>Eutheria</taxon>
        <taxon>Euarchontoglires</taxon>
        <taxon>Glires</taxon>
        <taxon>Rodentia</taxon>
        <taxon>Myomorpha</taxon>
        <taxon>Muroidea</taxon>
        <taxon>Muridae</taxon>
        <taxon>Murinae</taxon>
        <taxon>Rattus</taxon>
    </lineage>
</organism>
<evidence type="ECO:0000250" key="1"/>
<evidence type="ECO:0000250" key="2">
    <source>
        <dbReference type="UniProtKB" id="P97434"/>
    </source>
</evidence>
<evidence type="ECO:0000250" key="3">
    <source>
        <dbReference type="UniProtKB" id="Q6WCQ1"/>
    </source>
</evidence>
<evidence type="ECO:0000255" key="4"/>
<evidence type="ECO:0000255" key="5">
    <source>
        <dbReference type="PROSITE-ProRule" id="PRU00145"/>
    </source>
</evidence>
<evidence type="ECO:0000256" key="6">
    <source>
        <dbReference type="SAM" id="MobiDB-lite"/>
    </source>
</evidence>
<evidence type="ECO:0000303" key="7">
    <source>
    </source>
</evidence>
<evidence type="ECO:0000305" key="8"/>
<evidence type="ECO:0007744" key="9">
    <source>
    </source>
</evidence>
<feature type="chain" id="PRO_0000097352" description="Myosin phosphatase Rho-interacting protein">
    <location>
        <begin position="1"/>
        <end position="1029"/>
    </location>
</feature>
<feature type="domain" description="PH 1" evidence="5">
    <location>
        <begin position="43"/>
        <end position="150"/>
    </location>
</feature>
<feature type="domain" description="PH 2" evidence="5">
    <location>
        <begin position="391"/>
        <end position="487"/>
    </location>
</feature>
<feature type="region of interest" description="Interaction with F-actin" evidence="1">
    <location>
        <begin position="1"/>
        <end position="387"/>
    </location>
</feature>
<feature type="region of interest" description="Disordered" evidence="6">
    <location>
        <begin position="152"/>
        <end position="267"/>
    </location>
</feature>
<feature type="region of interest" description="Disordered" evidence="6">
    <location>
        <begin position="279"/>
        <end position="306"/>
    </location>
</feature>
<feature type="region of interest" description="Disordered" evidence="6">
    <location>
        <begin position="333"/>
        <end position="383"/>
    </location>
</feature>
<feature type="region of interest" description="Disordered" evidence="6">
    <location>
        <begin position="490"/>
        <end position="614"/>
    </location>
</feature>
<feature type="region of interest" description="Interaction with RHOA" evidence="1">
    <location>
        <begin position="550"/>
        <end position="828"/>
    </location>
</feature>
<feature type="region of interest" description="Interaction with PPP1R12A" evidence="1">
    <location>
        <begin position="828"/>
        <end position="883"/>
    </location>
</feature>
<feature type="coiled-coil region" evidence="4">
    <location>
        <begin position="675"/>
        <end position="979"/>
    </location>
</feature>
<feature type="compositionally biased region" description="Low complexity" evidence="6">
    <location>
        <begin position="179"/>
        <end position="195"/>
    </location>
</feature>
<feature type="compositionally biased region" description="Low complexity" evidence="6">
    <location>
        <begin position="226"/>
        <end position="237"/>
    </location>
</feature>
<feature type="compositionally biased region" description="Basic and acidic residues" evidence="6">
    <location>
        <begin position="245"/>
        <end position="267"/>
    </location>
</feature>
<feature type="compositionally biased region" description="Basic and acidic residues" evidence="6">
    <location>
        <begin position="338"/>
        <end position="354"/>
    </location>
</feature>
<feature type="compositionally biased region" description="Polar residues" evidence="6">
    <location>
        <begin position="492"/>
        <end position="509"/>
    </location>
</feature>
<feature type="compositionally biased region" description="Basic and acidic residues" evidence="6">
    <location>
        <begin position="527"/>
        <end position="550"/>
    </location>
</feature>
<feature type="compositionally biased region" description="Polar residues" evidence="6">
    <location>
        <begin position="562"/>
        <end position="571"/>
    </location>
</feature>
<feature type="compositionally biased region" description="Basic and acidic residues" evidence="6">
    <location>
        <begin position="583"/>
        <end position="592"/>
    </location>
</feature>
<feature type="modified residue" description="Phosphoserine" evidence="3">
    <location>
        <position position="198"/>
    </location>
</feature>
<feature type="modified residue" description="Phosphoserine" evidence="2">
    <location>
        <position position="224"/>
    </location>
</feature>
<feature type="modified residue" description="Phosphoserine" evidence="9">
    <location>
        <position position="226"/>
    </location>
</feature>
<feature type="modified residue" description="Phosphoserine" evidence="9">
    <location>
        <position position="230"/>
    </location>
</feature>
<feature type="modified residue" description="Phosphoserine" evidence="3">
    <location>
        <position position="232"/>
    </location>
</feature>
<feature type="modified residue" description="Phosphoserine" evidence="3">
    <location>
        <position position="271"/>
    </location>
</feature>
<feature type="modified residue" description="Phosphoserine" evidence="3">
    <location>
        <position position="275"/>
    </location>
</feature>
<feature type="modified residue" description="Phosphoserine" evidence="3">
    <location>
        <position position="294"/>
    </location>
</feature>
<feature type="modified residue" description="Phosphoserine" evidence="9">
    <location>
        <position position="297"/>
    </location>
</feature>
<feature type="modified residue" description="Phosphothreonine" evidence="3">
    <location>
        <position position="300"/>
    </location>
</feature>
<feature type="modified residue" description="Phosphoserine" evidence="3">
    <location>
        <position position="369"/>
    </location>
</feature>
<feature type="modified residue" description="Phosphoserine" evidence="3">
    <location>
        <position position="497"/>
    </location>
</feature>
<feature type="modified residue" description="Phosphoserine" evidence="9">
    <location>
        <position position="622"/>
    </location>
</feature>
<feature type="modified residue" description="Phosphothreonine" evidence="3">
    <location>
        <position position="650"/>
    </location>
</feature>
<feature type="modified residue" description="Phosphoserine" evidence="3">
    <location>
        <position position="804"/>
    </location>
</feature>
<feature type="modified residue" description="Phosphoserine" evidence="9">
    <location>
        <position position="981"/>
    </location>
</feature>
<feature type="modified residue" description="Phosphoserine" evidence="9">
    <location>
        <position position="997"/>
    </location>
</feature>
<feature type="modified residue" description="Phosphoserine" evidence="2">
    <location>
        <position position="1018"/>
    </location>
</feature>
<feature type="modified residue" description="Phosphoserine" evidence="3">
    <location>
        <position position="1020"/>
    </location>
</feature>
<feature type="splice variant" id="VSP_017301" description="In isoform 2." evidence="7">
    <location>
        <begin position="352"/>
        <end position="387"/>
    </location>
</feature>
<feature type="sequence conflict" description="In Ref. 2; AAH98911." evidence="8" ref="2">
    <original>R</original>
    <variation>G</variation>
    <location>
        <position position="886"/>
    </location>
</feature>
<keyword id="KW-0009">Actin-binding</keyword>
<keyword id="KW-0025">Alternative splicing</keyword>
<keyword id="KW-0175">Coiled coil</keyword>
<keyword id="KW-0963">Cytoplasm</keyword>
<keyword id="KW-0206">Cytoskeleton</keyword>
<keyword id="KW-0597">Phosphoprotein</keyword>
<keyword id="KW-1185">Reference proteome</keyword>
<keyword id="KW-0677">Repeat</keyword>
<reference key="1">
    <citation type="submission" date="2000-10" db="EMBL/GenBank/DDBJ databases">
        <title>Cloning and sequencing of the rat homologue of p116Rip.</title>
        <authorList>
            <person name="Lanson N.A. Jr."/>
            <person name="Royals B.A."/>
            <person name="Claycomb W.C."/>
        </authorList>
    </citation>
    <scope>NUCLEOTIDE SEQUENCE [MRNA] (ISOFORM 1)</scope>
    <source>
        <strain>Sprague-Dawley</strain>
        <tissue>Heart</tissue>
    </source>
</reference>
<reference key="2">
    <citation type="journal article" date="2004" name="Genome Res.">
        <title>The status, quality, and expansion of the NIH full-length cDNA project: the Mammalian Gene Collection (MGC).</title>
        <authorList>
            <consortium name="The MGC Project Team"/>
        </authorList>
    </citation>
    <scope>NUCLEOTIDE SEQUENCE [LARGE SCALE MRNA] (ISOFORM 2)</scope>
    <source>
        <tissue>Placenta</tissue>
    </source>
</reference>
<reference key="3">
    <citation type="journal article" date="2012" name="Nat. Commun.">
        <title>Quantitative maps of protein phosphorylation sites across 14 different rat organs and tissues.</title>
        <authorList>
            <person name="Lundby A."/>
            <person name="Secher A."/>
            <person name="Lage K."/>
            <person name="Nordsborg N.B."/>
            <person name="Dmytriyev A."/>
            <person name="Lundby C."/>
            <person name="Olsen J.V."/>
        </authorList>
    </citation>
    <scope>PHOSPHORYLATION [LARGE SCALE ANALYSIS] AT SER-226; SER-230; SER-297; SER-622; SER-981 AND SER-997</scope>
    <scope>IDENTIFICATION BY MASS SPECTROMETRY [LARGE SCALE ANALYSIS]</scope>
</reference>